<reference key="1">
    <citation type="journal article" date="2007" name="PLoS ONE">
        <title>Complete genomic characterization of a pathogenic A.II strain of Francisella tularensis subspecies tularensis.</title>
        <authorList>
            <person name="Beckstrom-Sternberg S.M."/>
            <person name="Auerbach R.K."/>
            <person name="Godbole S."/>
            <person name="Pearson J.V."/>
            <person name="Beckstrom-Sternberg J.S."/>
            <person name="Deng Z."/>
            <person name="Munk C."/>
            <person name="Kubota K."/>
            <person name="Zhou Y."/>
            <person name="Bruce D."/>
            <person name="Noronha J."/>
            <person name="Scheuermann R.H."/>
            <person name="Wang A."/>
            <person name="Wei X."/>
            <person name="Wang J."/>
            <person name="Hao J."/>
            <person name="Wagner D.M."/>
            <person name="Brettin T.S."/>
            <person name="Brown N."/>
            <person name="Gilna P."/>
            <person name="Keim P.S."/>
        </authorList>
    </citation>
    <scope>NUCLEOTIDE SEQUENCE [LARGE SCALE GENOMIC DNA]</scope>
    <source>
        <strain>WY96-3418</strain>
    </source>
</reference>
<protein>
    <recommendedName>
        <fullName evidence="1">Ribosomal RNA small subunit methyltransferase H</fullName>
        <ecNumber evidence="1">2.1.1.199</ecNumber>
    </recommendedName>
    <alternativeName>
        <fullName evidence="1">16S rRNA m(4)C1402 methyltransferase</fullName>
    </alternativeName>
    <alternativeName>
        <fullName evidence="1">rRNA (cytosine-N(4)-)-methyltransferase RsmH</fullName>
    </alternativeName>
</protein>
<name>RSMH_FRATW</name>
<sequence length="299" mass="33753">MQESINDLNINPQGIYIDATFGRGGHSKAILNRLTTGRLIAFDKDLDAISYARENFQFSNFEIVHASFASIYDYCLQHSLLGKIDGIIMDLGVSSPQLDNAARGFSFTHNGPLDMRMDVSKGITASQALEELSVDDLSYIFKVYGEERFAKKIALRIKDYIQQNGSIRTTLELAELIRATIGKKEKKNPATRCFQALRIYVNNELKDLEALLENILAVIKSGGRIAVISFHSLEDRIVKQKFSALINPKQELNRITKMLPQDSSQIKLKWITKKSKANEDELNQNVRSRSAILRVVEKL</sequence>
<gene>
    <name evidence="1" type="primary">rsmH</name>
    <name type="synonym">mraW</name>
    <name type="ordered locus">FTW_1548</name>
</gene>
<dbReference type="EC" id="2.1.1.199" evidence="1"/>
<dbReference type="EMBL" id="CP000608">
    <property type="protein sequence ID" value="ABO47260.1"/>
    <property type="molecule type" value="Genomic_DNA"/>
</dbReference>
<dbReference type="SMR" id="A4IZB0"/>
<dbReference type="KEGG" id="ftw:FTW_1548"/>
<dbReference type="HOGENOM" id="CLU_038422_2_0_6"/>
<dbReference type="GO" id="GO:0005737">
    <property type="term" value="C:cytoplasm"/>
    <property type="evidence" value="ECO:0007669"/>
    <property type="project" value="UniProtKB-SubCell"/>
</dbReference>
<dbReference type="GO" id="GO:0071424">
    <property type="term" value="F:rRNA (cytosine-N4-)-methyltransferase activity"/>
    <property type="evidence" value="ECO:0007669"/>
    <property type="project" value="UniProtKB-UniRule"/>
</dbReference>
<dbReference type="GO" id="GO:0070475">
    <property type="term" value="P:rRNA base methylation"/>
    <property type="evidence" value="ECO:0007669"/>
    <property type="project" value="UniProtKB-UniRule"/>
</dbReference>
<dbReference type="Gene3D" id="1.10.150.170">
    <property type="entry name" value="Putative methyltransferase TM0872, insert domain"/>
    <property type="match status" value="1"/>
</dbReference>
<dbReference type="Gene3D" id="3.40.50.150">
    <property type="entry name" value="Vaccinia Virus protein VP39"/>
    <property type="match status" value="1"/>
</dbReference>
<dbReference type="HAMAP" id="MF_01007">
    <property type="entry name" value="16SrRNA_methyltr_H"/>
    <property type="match status" value="1"/>
</dbReference>
<dbReference type="InterPro" id="IPR002903">
    <property type="entry name" value="RsmH"/>
</dbReference>
<dbReference type="InterPro" id="IPR023397">
    <property type="entry name" value="SAM-dep_MeTrfase_MraW_recog"/>
</dbReference>
<dbReference type="InterPro" id="IPR029063">
    <property type="entry name" value="SAM-dependent_MTases_sf"/>
</dbReference>
<dbReference type="NCBIfam" id="TIGR00006">
    <property type="entry name" value="16S rRNA (cytosine(1402)-N(4))-methyltransferase RsmH"/>
    <property type="match status" value="1"/>
</dbReference>
<dbReference type="PANTHER" id="PTHR11265:SF0">
    <property type="entry name" value="12S RRNA N4-METHYLCYTIDINE METHYLTRANSFERASE"/>
    <property type="match status" value="1"/>
</dbReference>
<dbReference type="PANTHER" id="PTHR11265">
    <property type="entry name" value="S-ADENOSYL-METHYLTRANSFERASE MRAW"/>
    <property type="match status" value="1"/>
</dbReference>
<dbReference type="Pfam" id="PF01795">
    <property type="entry name" value="Methyltransf_5"/>
    <property type="match status" value="1"/>
</dbReference>
<dbReference type="PIRSF" id="PIRSF004486">
    <property type="entry name" value="MraW"/>
    <property type="match status" value="1"/>
</dbReference>
<dbReference type="SUPFAM" id="SSF81799">
    <property type="entry name" value="Putative methyltransferase TM0872, insert domain"/>
    <property type="match status" value="1"/>
</dbReference>
<dbReference type="SUPFAM" id="SSF53335">
    <property type="entry name" value="S-adenosyl-L-methionine-dependent methyltransferases"/>
    <property type="match status" value="1"/>
</dbReference>
<evidence type="ECO:0000255" key="1">
    <source>
        <dbReference type="HAMAP-Rule" id="MF_01007"/>
    </source>
</evidence>
<comment type="function">
    <text evidence="1">Specifically methylates the N4 position of cytidine in position 1402 (C1402) of 16S rRNA.</text>
</comment>
<comment type="catalytic activity">
    <reaction evidence="1">
        <text>cytidine(1402) in 16S rRNA + S-adenosyl-L-methionine = N(4)-methylcytidine(1402) in 16S rRNA + S-adenosyl-L-homocysteine + H(+)</text>
        <dbReference type="Rhea" id="RHEA:42928"/>
        <dbReference type="Rhea" id="RHEA-COMP:10286"/>
        <dbReference type="Rhea" id="RHEA-COMP:10287"/>
        <dbReference type="ChEBI" id="CHEBI:15378"/>
        <dbReference type="ChEBI" id="CHEBI:57856"/>
        <dbReference type="ChEBI" id="CHEBI:59789"/>
        <dbReference type="ChEBI" id="CHEBI:74506"/>
        <dbReference type="ChEBI" id="CHEBI:82748"/>
        <dbReference type="EC" id="2.1.1.199"/>
    </reaction>
</comment>
<comment type="subcellular location">
    <subcellularLocation>
        <location evidence="1">Cytoplasm</location>
    </subcellularLocation>
</comment>
<comment type="similarity">
    <text evidence="1">Belongs to the methyltransferase superfamily. RsmH family.</text>
</comment>
<organism>
    <name type="scientific">Francisella tularensis subsp. tularensis (strain WY96-3418)</name>
    <dbReference type="NCBI Taxonomy" id="418136"/>
    <lineage>
        <taxon>Bacteria</taxon>
        <taxon>Pseudomonadati</taxon>
        <taxon>Pseudomonadota</taxon>
        <taxon>Gammaproteobacteria</taxon>
        <taxon>Thiotrichales</taxon>
        <taxon>Francisellaceae</taxon>
        <taxon>Francisella</taxon>
    </lineage>
</organism>
<accession>A4IZB0</accession>
<proteinExistence type="inferred from homology"/>
<keyword id="KW-0963">Cytoplasm</keyword>
<keyword id="KW-0489">Methyltransferase</keyword>
<keyword id="KW-0698">rRNA processing</keyword>
<keyword id="KW-0949">S-adenosyl-L-methionine</keyword>
<keyword id="KW-0808">Transferase</keyword>
<feature type="chain" id="PRO_0000386902" description="Ribosomal RNA small subunit methyltransferase H">
    <location>
        <begin position="1"/>
        <end position="299"/>
    </location>
</feature>
<feature type="binding site" evidence="1">
    <location>
        <begin position="24"/>
        <end position="26"/>
    </location>
    <ligand>
        <name>S-adenosyl-L-methionine</name>
        <dbReference type="ChEBI" id="CHEBI:59789"/>
    </ligand>
</feature>
<feature type="binding site" evidence="1">
    <location>
        <position position="43"/>
    </location>
    <ligand>
        <name>S-adenosyl-L-methionine</name>
        <dbReference type="ChEBI" id="CHEBI:59789"/>
    </ligand>
</feature>
<feature type="binding site" evidence="1">
    <location>
        <position position="68"/>
    </location>
    <ligand>
        <name>S-adenosyl-L-methionine</name>
        <dbReference type="ChEBI" id="CHEBI:59789"/>
    </ligand>
</feature>
<feature type="binding site" evidence="1">
    <location>
        <position position="90"/>
    </location>
    <ligand>
        <name>S-adenosyl-L-methionine</name>
        <dbReference type="ChEBI" id="CHEBI:59789"/>
    </ligand>
</feature>
<feature type="binding site" evidence="1">
    <location>
        <position position="97"/>
    </location>
    <ligand>
        <name>S-adenosyl-L-methionine</name>
        <dbReference type="ChEBI" id="CHEBI:59789"/>
    </ligand>
</feature>